<sequence length="83" mass="9479">MDFQALLSQLPQETLFVLLAYGAVLGTYLIAVPLALYAWINLRWYRMSKFERLGVYGLVFLFFPGMIVFAPFINLRLSGQGEV</sequence>
<gene>
    <name evidence="1" type="primary">ndhL</name>
    <name type="ordered locus">Syncc9902_0894</name>
</gene>
<comment type="function">
    <text evidence="1">NDH-1 shuttles electrons from an unknown electron donor, via FMN and iron-sulfur (Fe-S) centers, to quinones in the respiratory and/or the photosynthetic chain. The immediate electron acceptor for the enzyme in this species is believed to be plastoquinone. Couples the redox reaction to proton translocation, and thus conserves the redox energy in a proton gradient. Cyanobacterial NDH-1 also plays a role in inorganic carbon-concentration.</text>
</comment>
<comment type="catalytic activity">
    <reaction evidence="1">
        <text>a plastoquinone + NADH + (n+1) H(+)(in) = a plastoquinol + NAD(+) + n H(+)(out)</text>
        <dbReference type="Rhea" id="RHEA:42608"/>
        <dbReference type="Rhea" id="RHEA-COMP:9561"/>
        <dbReference type="Rhea" id="RHEA-COMP:9562"/>
        <dbReference type="ChEBI" id="CHEBI:15378"/>
        <dbReference type="ChEBI" id="CHEBI:17757"/>
        <dbReference type="ChEBI" id="CHEBI:57540"/>
        <dbReference type="ChEBI" id="CHEBI:57945"/>
        <dbReference type="ChEBI" id="CHEBI:62192"/>
    </reaction>
</comment>
<comment type="catalytic activity">
    <reaction evidence="1">
        <text>a plastoquinone + NADPH + (n+1) H(+)(in) = a plastoquinol + NADP(+) + n H(+)(out)</text>
        <dbReference type="Rhea" id="RHEA:42612"/>
        <dbReference type="Rhea" id="RHEA-COMP:9561"/>
        <dbReference type="Rhea" id="RHEA-COMP:9562"/>
        <dbReference type="ChEBI" id="CHEBI:15378"/>
        <dbReference type="ChEBI" id="CHEBI:17757"/>
        <dbReference type="ChEBI" id="CHEBI:57783"/>
        <dbReference type="ChEBI" id="CHEBI:58349"/>
        <dbReference type="ChEBI" id="CHEBI:62192"/>
    </reaction>
</comment>
<comment type="subunit">
    <text evidence="1">NDH-1 can be composed of about 15 different subunits; different subcomplexes with different compositions have been identified which probably have different functions.</text>
</comment>
<comment type="subcellular location">
    <subcellularLocation>
        <location evidence="1">Cellular thylakoid membrane</location>
        <topology evidence="1">Multi-pass membrane protein</topology>
    </subcellularLocation>
</comment>
<comment type="similarity">
    <text evidence="1">Belongs to the complex I NdhL subunit family.</text>
</comment>
<feature type="chain" id="PRO_0000353689" description="NAD(P)H-quinone oxidoreductase subunit L">
    <location>
        <begin position="1"/>
        <end position="83"/>
    </location>
</feature>
<feature type="transmembrane region" description="Helical" evidence="1">
    <location>
        <begin position="15"/>
        <end position="35"/>
    </location>
</feature>
<feature type="transmembrane region" description="Helical" evidence="1">
    <location>
        <begin position="53"/>
        <end position="73"/>
    </location>
</feature>
<protein>
    <recommendedName>
        <fullName evidence="1">NAD(P)H-quinone oxidoreductase subunit L</fullName>
        <ecNumber evidence="1">7.1.1.-</ecNumber>
    </recommendedName>
    <alternativeName>
        <fullName evidence="1">NAD(P)H dehydrogenase I subunit L</fullName>
    </alternativeName>
    <alternativeName>
        <fullName>NDH-1 subunit L</fullName>
    </alternativeName>
    <alternativeName>
        <fullName>NDH-L</fullName>
    </alternativeName>
</protein>
<proteinExistence type="inferred from homology"/>
<keyword id="KW-0472">Membrane</keyword>
<keyword id="KW-0520">NAD</keyword>
<keyword id="KW-0521">NADP</keyword>
<keyword id="KW-0618">Plastoquinone</keyword>
<keyword id="KW-0874">Quinone</keyword>
<keyword id="KW-1185">Reference proteome</keyword>
<keyword id="KW-0793">Thylakoid</keyword>
<keyword id="KW-1278">Translocase</keyword>
<keyword id="KW-0812">Transmembrane</keyword>
<keyword id="KW-1133">Transmembrane helix</keyword>
<keyword id="KW-0813">Transport</keyword>
<accession>Q3AYG7</accession>
<organism>
    <name type="scientific">Synechococcus sp. (strain CC9902)</name>
    <dbReference type="NCBI Taxonomy" id="316279"/>
    <lineage>
        <taxon>Bacteria</taxon>
        <taxon>Bacillati</taxon>
        <taxon>Cyanobacteriota</taxon>
        <taxon>Cyanophyceae</taxon>
        <taxon>Synechococcales</taxon>
        <taxon>Synechococcaceae</taxon>
        <taxon>Synechococcus</taxon>
    </lineage>
</organism>
<name>NDHL_SYNS9</name>
<dbReference type="EC" id="7.1.1.-" evidence="1"/>
<dbReference type="EMBL" id="CP000097">
    <property type="protein sequence ID" value="ABB25860.1"/>
    <property type="molecule type" value="Genomic_DNA"/>
</dbReference>
<dbReference type="RefSeq" id="WP_011359696.1">
    <property type="nucleotide sequence ID" value="NC_007513.1"/>
</dbReference>
<dbReference type="SMR" id="Q3AYG7"/>
<dbReference type="STRING" id="316279.Syncc9902_0894"/>
<dbReference type="KEGG" id="sye:Syncc9902_0894"/>
<dbReference type="eggNOG" id="ENOG5032ZM4">
    <property type="taxonomic scope" value="Bacteria"/>
</dbReference>
<dbReference type="HOGENOM" id="CLU_171077_1_0_3"/>
<dbReference type="OrthoDB" id="517549at2"/>
<dbReference type="Proteomes" id="UP000002712">
    <property type="component" value="Chromosome"/>
</dbReference>
<dbReference type="GO" id="GO:0031676">
    <property type="term" value="C:plasma membrane-derived thylakoid membrane"/>
    <property type="evidence" value="ECO:0007669"/>
    <property type="project" value="UniProtKB-SubCell"/>
</dbReference>
<dbReference type="GO" id="GO:0016655">
    <property type="term" value="F:oxidoreductase activity, acting on NAD(P)H, quinone or similar compound as acceptor"/>
    <property type="evidence" value="ECO:0007669"/>
    <property type="project" value="UniProtKB-UniRule"/>
</dbReference>
<dbReference type="GO" id="GO:0048038">
    <property type="term" value="F:quinone binding"/>
    <property type="evidence" value="ECO:0007669"/>
    <property type="project" value="UniProtKB-KW"/>
</dbReference>
<dbReference type="HAMAP" id="MF_01355">
    <property type="entry name" value="NDH1_NDH1L"/>
    <property type="match status" value="1"/>
</dbReference>
<dbReference type="InterPro" id="IPR019654">
    <property type="entry name" value="NADH-quinone_OxRdatse_su_L"/>
</dbReference>
<dbReference type="PANTHER" id="PTHR36727">
    <property type="entry name" value="NAD(P)H-QUINONE OXIDOREDUCTASE SUBUNIT L, CHLOROPLASTIC"/>
    <property type="match status" value="1"/>
</dbReference>
<dbReference type="PANTHER" id="PTHR36727:SF2">
    <property type="entry name" value="NAD(P)H-QUINONE OXIDOREDUCTASE SUBUNIT L, CHLOROPLASTIC"/>
    <property type="match status" value="1"/>
</dbReference>
<dbReference type="Pfam" id="PF10716">
    <property type="entry name" value="NdhL"/>
    <property type="match status" value="1"/>
</dbReference>
<reference key="1">
    <citation type="submission" date="2005-08" db="EMBL/GenBank/DDBJ databases">
        <title>Complete sequence of Synechococcus sp. CC9902.</title>
        <authorList>
            <person name="Copeland A."/>
            <person name="Lucas S."/>
            <person name="Lapidus A."/>
            <person name="Barry K."/>
            <person name="Detter J.C."/>
            <person name="Glavina T."/>
            <person name="Hammon N."/>
            <person name="Israni S."/>
            <person name="Pitluck S."/>
            <person name="Martinez M."/>
            <person name="Schmutz J."/>
            <person name="Larimer F."/>
            <person name="Land M."/>
            <person name="Kyrpides N."/>
            <person name="Ivanova N."/>
            <person name="Richardson P."/>
        </authorList>
    </citation>
    <scope>NUCLEOTIDE SEQUENCE [LARGE SCALE GENOMIC DNA]</scope>
    <source>
        <strain>CC9902</strain>
    </source>
</reference>
<evidence type="ECO:0000255" key="1">
    <source>
        <dbReference type="HAMAP-Rule" id="MF_01355"/>
    </source>
</evidence>